<proteinExistence type="inferred from homology"/>
<evidence type="ECO:0000255" key="1">
    <source>
        <dbReference type="HAMAP-Rule" id="MF_02006"/>
    </source>
</evidence>
<protein>
    <recommendedName>
        <fullName evidence="1">Tyrosine--tRNA ligase</fullName>
        <ecNumber evidence="1">6.1.1.1</ecNumber>
    </recommendedName>
    <alternativeName>
        <fullName evidence="1">Tyrosyl-tRNA synthetase</fullName>
        <shortName evidence="1">TyrRS</shortName>
    </alternativeName>
</protein>
<organism>
    <name type="scientific">Malacoplasma penetrans (strain HF-2)</name>
    <name type="common">Mycoplasma penetrans</name>
    <dbReference type="NCBI Taxonomy" id="272633"/>
    <lineage>
        <taxon>Bacteria</taxon>
        <taxon>Bacillati</taxon>
        <taxon>Mycoplasmatota</taxon>
        <taxon>Mycoplasmoidales</taxon>
        <taxon>Mycoplasmoidaceae</taxon>
        <taxon>Malacoplasma</taxon>
    </lineage>
</organism>
<keyword id="KW-0030">Aminoacyl-tRNA synthetase</keyword>
<keyword id="KW-0067">ATP-binding</keyword>
<keyword id="KW-0963">Cytoplasm</keyword>
<keyword id="KW-0436">Ligase</keyword>
<keyword id="KW-0547">Nucleotide-binding</keyword>
<keyword id="KW-0648">Protein biosynthesis</keyword>
<keyword id="KW-1185">Reference proteome</keyword>
<keyword id="KW-0694">RNA-binding</keyword>
<accession>Q8EUX2</accession>
<reference key="1">
    <citation type="journal article" date="2002" name="Nucleic Acids Res.">
        <title>The complete genomic sequence of Mycoplasma penetrans, an intracellular bacterial pathogen in humans.</title>
        <authorList>
            <person name="Sasaki Y."/>
            <person name="Ishikawa J."/>
            <person name="Yamashita A."/>
            <person name="Oshima K."/>
            <person name="Kenri T."/>
            <person name="Furuya K."/>
            <person name="Yoshino C."/>
            <person name="Horino A."/>
            <person name="Shiba T."/>
            <person name="Sasaki T."/>
            <person name="Hattori M."/>
        </authorList>
    </citation>
    <scope>NUCLEOTIDE SEQUENCE [LARGE SCALE GENOMIC DNA]</scope>
    <source>
        <strain>HF-2</strain>
    </source>
</reference>
<name>SYY_MALP2</name>
<sequence length="411" mass="46717">MKNKNILEFLKKRGYIYQGSNFDLIEKELIKGTSFYIGFDPTADSLHVGHFLTMMAVKHLQKAGNNPVIVVGGGTGSVGDPSGRSEIRKILDRKTIDYNCECLKKQMSKFISFEGKNKAVMVNNADWLLKINWIEFLREFGVCFSVNKMLAAEAFKVRFEQESGLSFLEFNYMLMQAYDFYYLNQNYNVNIQLGGSDQWSNILAGVDLIRRKSSKEAFALTLNLLTKHDGTKMGKTATGAIWLDKNKTSPYEFYQYWLNIDDQDVERFLLLLTELDDKTISDLCKEKGKKIVEAKKVLASELTKMIHGQEELDKAIEQSKAAFENASDNLPTYELKASDLNNDYSIANILVVTKLSPSKAESRRLITSNAVSVNETKITDVNTKLEDLKIDQTNFTLHKGKKNHIKVIINK</sequence>
<dbReference type="EC" id="6.1.1.1" evidence="1"/>
<dbReference type="EMBL" id="BA000026">
    <property type="protein sequence ID" value="BAC44589.1"/>
    <property type="molecule type" value="Genomic_DNA"/>
</dbReference>
<dbReference type="RefSeq" id="WP_011077618.1">
    <property type="nucleotide sequence ID" value="NC_004432.1"/>
</dbReference>
<dbReference type="SMR" id="Q8EUX2"/>
<dbReference type="FunCoup" id="Q8EUX2">
    <property type="interactions" value="230"/>
</dbReference>
<dbReference type="STRING" id="272633.gene:10731918"/>
<dbReference type="KEGG" id="mpe:MYPE7960"/>
<dbReference type="eggNOG" id="COG0162">
    <property type="taxonomic scope" value="Bacteria"/>
</dbReference>
<dbReference type="HOGENOM" id="CLU_024003_0_3_14"/>
<dbReference type="InParanoid" id="Q8EUX2"/>
<dbReference type="Proteomes" id="UP000002522">
    <property type="component" value="Chromosome"/>
</dbReference>
<dbReference type="GO" id="GO:0005829">
    <property type="term" value="C:cytosol"/>
    <property type="evidence" value="ECO:0007669"/>
    <property type="project" value="TreeGrafter"/>
</dbReference>
<dbReference type="GO" id="GO:0005524">
    <property type="term" value="F:ATP binding"/>
    <property type="evidence" value="ECO:0007669"/>
    <property type="project" value="UniProtKB-UniRule"/>
</dbReference>
<dbReference type="GO" id="GO:0003723">
    <property type="term" value="F:RNA binding"/>
    <property type="evidence" value="ECO:0007669"/>
    <property type="project" value="UniProtKB-KW"/>
</dbReference>
<dbReference type="GO" id="GO:0004831">
    <property type="term" value="F:tyrosine-tRNA ligase activity"/>
    <property type="evidence" value="ECO:0007669"/>
    <property type="project" value="UniProtKB-UniRule"/>
</dbReference>
<dbReference type="GO" id="GO:0006437">
    <property type="term" value="P:tyrosyl-tRNA aminoacylation"/>
    <property type="evidence" value="ECO:0007669"/>
    <property type="project" value="UniProtKB-UniRule"/>
</dbReference>
<dbReference type="CDD" id="cd00165">
    <property type="entry name" value="S4"/>
    <property type="match status" value="1"/>
</dbReference>
<dbReference type="CDD" id="cd00805">
    <property type="entry name" value="TyrRS_core"/>
    <property type="match status" value="1"/>
</dbReference>
<dbReference type="FunFam" id="1.10.240.10:FF:000001">
    <property type="entry name" value="Tyrosine--tRNA ligase"/>
    <property type="match status" value="1"/>
</dbReference>
<dbReference type="Gene3D" id="3.40.50.620">
    <property type="entry name" value="HUPs"/>
    <property type="match status" value="1"/>
</dbReference>
<dbReference type="Gene3D" id="3.10.290.10">
    <property type="entry name" value="RNA-binding S4 domain"/>
    <property type="match status" value="1"/>
</dbReference>
<dbReference type="Gene3D" id="1.10.240.10">
    <property type="entry name" value="Tyrosyl-Transfer RNA Synthetase"/>
    <property type="match status" value="1"/>
</dbReference>
<dbReference type="HAMAP" id="MF_02006">
    <property type="entry name" value="Tyr_tRNA_synth_type1"/>
    <property type="match status" value="1"/>
</dbReference>
<dbReference type="InterPro" id="IPR001412">
    <property type="entry name" value="aa-tRNA-synth_I_CS"/>
</dbReference>
<dbReference type="InterPro" id="IPR002305">
    <property type="entry name" value="aa-tRNA-synth_Ic"/>
</dbReference>
<dbReference type="InterPro" id="IPR014729">
    <property type="entry name" value="Rossmann-like_a/b/a_fold"/>
</dbReference>
<dbReference type="InterPro" id="IPR036986">
    <property type="entry name" value="S4_RNA-bd_sf"/>
</dbReference>
<dbReference type="InterPro" id="IPR054608">
    <property type="entry name" value="SYY-like_C"/>
</dbReference>
<dbReference type="InterPro" id="IPR002307">
    <property type="entry name" value="Tyr-tRNA-ligase"/>
</dbReference>
<dbReference type="InterPro" id="IPR024088">
    <property type="entry name" value="Tyr-tRNA-ligase_bac-type"/>
</dbReference>
<dbReference type="InterPro" id="IPR024107">
    <property type="entry name" value="Tyr-tRNA-ligase_bac_1"/>
</dbReference>
<dbReference type="NCBIfam" id="TIGR00234">
    <property type="entry name" value="tyrS"/>
    <property type="match status" value="1"/>
</dbReference>
<dbReference type="PANTHER" id="PTHR11766:SF0">
    <property type="entry name" value="TYROSINE--TRNA LIGASE, MITOCHONDRIAL"/>
    <property type="match status" value="1"/>
</dbReference>
<dbReference type="PANTHER" id="PTHR11766">
    <property type="entry name" value="TYROSYL-TRNA SYNTHETASE"/>
    <property type="match status" value="1"/>
</dbReference>
<dbReference type="Pfam" id="PF22421">
    <property type="entry name" value="SYY_C-terminal"/>
    <property type="match status" value="1"/>
</dbReference>
<dbReference type="Pfam" id="PF00579">
    <property type="entry name" value="tRNA-synt_1b"/>
    <property type="match status" value="1"/>
</dbReference>
<dbReference type="PRINTS" id="PR01040">
    <property type="entry name" value="TRNASYNTHTYR"/>
</dbReference>
<dbReference type="SUPFAM" id="SSF55174">
    <property type="entry name" value="Alpha-L RNA-binding motif"/>
    <property type="match status" value="1"/>
</dbReference>
<dbReference type="SUPFAM" id="SSF52374">
    <property type="entry name" value="Nucleotidylyl transferase"/>
    <property type="match status" value="1"/>
</dbReference>
<dbReference type="PROSITE" id="PS00178">
    <property type="entry name" value="AA_TRNA_LIGASE_I"/>
    <property type="match status" value="1"/>
</dbReference>
<dbReference type="PROSITE" id="PS50889">
    <property type="entry name" value="S4"/>
    <property type="match status" value="1"/>
</dbReference>
<gene>
    <name evidence="1" type="primary">tyrS</name>
    <name type="ordered locus">MYPE7960</name>
</gene>
<feature type="chain" id="PRO_0000234736" description="Tyrosine--tRNA ligase">
    <location>
        <begin position="1"/>
        <end position="411"/>
    </location>
</feature>
<feature type="domain" description="S4 RNA-binding" evidence="1">
    <location>
        <begin position="344"/>
        <end position="409"/>
    </location>
</feature>
<feature type="short sequence motif" description="'HIGH' region">
    <location>
        <begin position="41"/>
        <end position="50"/>
    </location>
</feature>
<feature type="short sequence motif" description="'KMSKS' region">
    <location>
        <begin position="232"/>
        <end position="236"/>
    </location>
</feature>
<feature type="binding site" evidence="1">
    <location>
        <position position="36"/>
    </location>
    <ligand>
        <name>L-tyrosine</name>
        <dbReference type="ChEBI" id="CHEBI:58315"/>
    </ligand>
</feature>
<feature type="binding site" evidence="1">
    <location>
        <position position="172"/>
    </location>
    <ligand>
        <name>L-tyrosine</name>
        <dbReference type="ChEBI" id="CHEBI:58315"/>
    </ligand>
</feature>
<feature type="binding site" evidence="1">
    <location>
        <position position="176"/>
    </location>
    <ligand>
        <name>L-tyrosine</name>
        <dbReference type="ChEBI" id="CHEBI:58315"/>
    </ligand>
</feature>
<feature type="binding site" evidence="1">
    <location>
        <position position="235"/>
    </location>
    <ligand>
        <name>ATP</name>
        <dbReference type="ChEBI" id="CHEBI:30616"/>
    </ligand>
</feature>
<comment type="function">
    <text evidence="1">Catalyzes the attachment of tyrosine to tRNA(Tyr) in a two-step reaction: tyrosine is first activated by ATP to form Tyr-AMP and then transferred to the acceptor end of tRNA(Tyr).</text>
</comment>
<comment type="catalytic activity">
    <reaction evidence="1">
        <text>tRNA(Tyr) + L-tyrosine + ATP = L-tyrosyl-tRNA(Tyr) + AMP + diphosphate + H(+)</text>
        <dbReference type="Rhea" id="RHEA:10220"/>
        <dbReference type="Rhea" id="RHEA-COMP:9706"/>
        <dbReference type="Rhea" id="RHEA-COMP:9707"/>
        <dbReference type="ChEBI" id="CHEBI:15378"/>
        <dbReference type="ChEBI" id="CHEBI:30616"/>
        <dbReference type="ChEBI" id="CHEBI:33019"/>
        <dbReference type="ChEBI" id="CHEBI:58315"/>
        <dbReference type="ChEBI" id="CHEBI:78442"/>
        <dbReference type="ChEBI" id="CHEBI:78536"/>
        <dbReference type="ChEBI" id="CHEBI:456215"/>
        <dbReference type="EC" id="6.1.1.1"/>
    </reaction>
</comment>
<comment type="subunit">
    <text evidence="1">Homodimer.</text>
</comment>
<comment type="subcellular location">
    <subcellularLocation>
        <location evidence="1">Cytoplasm</location>
    </subcellularLocation>
</comment>
<comment type="similarity">
    <text evidence="1">Belongs to the class-I aminoacyl-tRNA synthetase family. TyrS type 1 subfamily.</text>
</comment>